<gene>
    <name evidence="8" type="primary">SC4</name>
</gene>
<accession>P16934</accession>
<reference key="1">
    <citation type="journal article" date="1990" name="Gene">
        <title>Two genes specifically expressed in fruiting dikaryons of Schizophyllum commune: homologies with a gene not regulated by mating-type genes.</title>
        <authorList>
            <person name="Schuren F.H.J."/>
            <person name="Wessels J.G.H."/>
        </authorList>
    </citation>
    <scope>NUCLEOTIDE SEQUENCE [GENOMIC DNA]</scope>
    <scope>DEVELOPMENTAL STAGE</scope>
</reference>
<reference key="2">
    <citation type="journal article" date="1991" name="Plant Cell">
        <title>Hydrophobin Genes Involved in Formation of Aerial Hyphae and Fruit Bodies in Schizophyllum.</title>
        <authorList>
            <person name="Wessels J."/>
            <person name="De Vries O."/>
            <person name="Asgeirsdottir S.A."/>
            <person name="Schuren F."/>
        </authorList>
    </citation>
    <scope>FUNCTION</scope>
</reference>
<reference key="3">
    <citation type="journal article" date="1995" name="Microbiology">
        <title>Differential expression of genes under control of the mating-type genes in the secondary mycelium of Schizophyllum commune.</title>
        <authorList>
            <person name="Asgeirsdottir S.A."/>
            <person name="van Wetter Marianne A."/>
            <person name="Wesselsd J.G.H."/>
        </authorList>
    </citation>
    <scope>INDUCTION</scope>
</reference>
<reference key="4">
    <citation type="journal article" date="2000" name="Mol. Microbiol.">
        <title>SC3 and SC4 hydrophobins have distinct roles in formation of aerial structures in dikaryons of Schizophyllum commune.</title>
        <authorList>
            <person name="van Wetter M.A."/>
            <person name="Woesten H.A."/>
            <person name="Wessels J.G."/>
        </authorList>
    </citation>
    <scope>FUNCTION</scope>
    <scope>DISRUPTION PHENOTYPE</scope>
</reference>
<reference key="5">
    <citation type="journal article" date="2008" name="Fungal Genet. Biol.">
        <title>Hydrophobins Sc3 and Sc4 gene expression in mounds, fruiting bodies and vegetative hyphae of Schizophyllum commune.</title>
        <authorList>
            <person name="Banerjee G."/>
            <person name="Robertson D.L."/>
            <person name="Leonard T.J."/>
        </authorList>
    </citation>
    <scope>DEVELOPMENTAL STAGE</scope>
    <scope>FUNCTION</scope>
</reference>
<dbReference type="EMBL" id="M32330">
    <property type="protein sequence ID" value="AAA33927.1"/>
    <property type="molecule type" value="Genomic_DNA"/>
</dbReference>
<dbReference type="PIR" id="JH0183">
    <property type="entry name" value="JH0183"/>
</dbReference>
<dbReference type="SMR" id="P16934"/>
<dbReference type="GlyCosmos" id="P16934">
    <property type="glycosylation" value="1 site, No reported glycans"/>
</dbReference>
<dbReference type="VEuPathDB" id="FungiDB:SCHCODRAFT_073533"/>
<dbReference type="GO" id="GO:0005576">
    <property type="term" value="C:extracellular region"/>
    <property type="evidence" value="ECO:0007669"/>
    <property type="project" value="UniProtKB-SubCell"/>
</dbReference>
<dbReference type="GO" id="GO:0009277">
    <property type="term" value="C:fungal-type cell wall"/>
    <property type="evidence" value="ECO:0007669"/>
    <property type="project" value="InterPro"/>
</dbReference>
<dbReference type="GO" id="GO:0005199">
    <property type="term" value="F:structural constituent of cell wall"/>
    <property type="evidence" value="ECO:0007669"/>
    <property type="project" value="InterPro"/>
</dbReference>
<dbReference type="CDD" id="cd23507">
    <property type="entry name" value="hydrophobin_I"/>
    <property type="match status" value="1"/>
</dbReference>
<dbReference type="InterPro" id="IPR001338">
    <property type="entry name" value="Hydrophobin"/>
</dbReference>
<dbReference type="InterPro" id="IPR019778">
    <property type="entry name" value="Hydrophobin_CS"/>
</dbReference>
<dbReference type="Pfam" id="PF01185">
    <property type="entry name" value="Hydrophobin"/>
    <property type="match status" value="1"/>
</dbReference>
<dbReference type="SMART" id="SM00075">
    <property type="entry name" value="HYDRO"/>
    <property type="match status" value="1"/>
</dbReference>
<dbReference type="PROSITE" id="PS00956">
    <property type="entry name" value="HYDROPHOBIN"/>
    <property type="match status" value="1"/>
</dbReference>
<proteinExistence type="evidence at transcript level"/>
<name>SC4_SCHCO</name>
<organism>
    <name type="scientific">Schizophyllum commune</name>
    <name type="common">Split gill fungus</name>
    <dbReference type="NCBI Taxonomy" id="5334"/>
    <lineage>
        <taxon>Eukaryota</taxon>
        <taxon>Fungi</taxon>
        <taxon>Dikarya</taxon>
        <taxon>Basidiomycota</taxon>
        <taxon>Agaricomycotina</taxon>
        <taxon>Agaricomycetes</taxon>
        <taxon>Agaricomycetidae</taxon>
        <taxon>Agaricales</taxon>
        <taxon>Schizophyllaceae</taxon>
        <taxon>Schizophyllum</taxon>
    </lineage>
</organism>
<sequence length="111" mass="10730">MRFSLALLALPALAAAAPVPGGGKGAGQACNSGPVQCCNETTTVANAQKQGLLGGLLGVVVGPITGLVGLNCSPISVVGVLTGNSCTAQTVCCDHVTQNGLVNVGCTPISL</sequence>
<evidence type="ECO:0000250" key="1">
    <source>
        <dbReference type="UniProtKB" id="P16933"/>
    </source>
</evidence>
<evidence type="ECO:0000255" key="2"/>
<evidence type="ECO:0000269" key="3">
    <source>
    </source>
</evidence>
<evidence type="ECO:0000269" key="4">
    <source>
    </source>
</evidence>
<evidence type="ECO:0000269" key="5">
    <source>
    </source>
</evidence>
<evidence type="ECO:0000269" key="6">
    <source>
    </source>
</evidence>
<evidence type="ECO:0000269" key="7">
    <source>
    </source>
</evidence>
<evidence type="ECO:0000303" key="8">
    <source>
    </source>
</evidence>
<evidence type="ECO:0000305" key="9"/>
<comment type="function">
    <text evidence="3 4 5 9">Aerial growth, conidiation, and dispersal of filamentous fungi in the environment rely upon a capability of their secreting small amphipathic proteins called hydrophobins (HPBs) with low sequence identity. Class I can self-assemble into an outermost layer of rodlet bundles on aerial cell surfaces, conferring cellular hydrophobicity that supports fungal growth, development and dispersal; whereas Class II form highly ordered films at water-air interfaces through intermolecular interactions but contribute nothing to the rodlet structure (Probable). SC4 is a dikaryon-specific class I hydrophobin that contributes to the formation of aerial hyphae and fruiting bodies (PubMed:10760177, PubMed:12324614). Plays a role within fruiting bodies by preventing gas channels filling with water under wet conditions, probably serving uninterrupted gas exchange (PubMed:10760177). SC4 cannot fully substitute for SC3 (PubMed:10760177). Involved in the unusual characteristic of mounds to adhere to and completely envelop adjacent fruiting bodies on mosaic colonies (PubMed:18093852).</text>
</comment>
<comment type="subunit">
    <text evidence="1">Self-assembles to form functional amyloid fibrils called rodlets. Self-assembly into fibrillar rodlets occurs spontaneously at hydrophobic:hydrophilic interfaces and the rodlets further associate laterally to form amphipathic monolayers.</text>
</comment>
<comment type="subcellular location">
    <subcellularLocation>
        <location evidence="1">Secreted</location>
    </subcellularLocation>
    <subcellularLocation>
        <location evidence="1">Secreted</location>
        <location evidence="1">Cell wall</location>
    </subcellularLocation>
</comment>
<comment type="developmental stage">
    <text evidence="5 6">Is abundantly expressed and accumulates in the walls of developing fruiting bodies (only in fruiting dikaryons) (PubMed:18093852, PubMed:2401401). Expression is barely detectable in monokaryotic fruiting bodies but high in monokaryotic mound tissues (PubMed:18093852).</text>
</comment>
<comment type="induction">
    <text evidence="7">Expression is regulated by the mating-type genes in the secondary mycelium, and especially activated by both the MATA- and MATB-controlled pathways.</text>
</comment>
<comment type="disruption phenotype">
    <text evidence="3">Does not affect the formation of aerial structures but leads to gas channels in fruiting bodies that are easily filled with water.</text>
</comment>
<comment type="similarity">
    <text evidence="9">Belongs to the fungal hydrophobin family.</text>
</comment>
<keyword id="KW-0134">Cell wall</keyword>
<keyword id="KW-1015">Disulfide bond</keyword>
<keyword id="KW-0293">Fruiting body</keyword>
<keyword id="KW-0325">Glycoprotein</keyword>
<keyword id="KW-0964">Secreted</keyword>
<keyword id="KW-0732">Signal</keyword>
<protein>
    <recommendedName>
        <fullName evidence="8">Class I hydrophobin SC4</fullName>
    </recommendedName>
    <alternativeName>
        <fullName evidence="8">Fruiting body protein SC4</fullName>
    </alternativeName>
</protein>
<feature type="signal peptide" evidence="2">
    <location>
        <begin position="1"/>
        <end position="25"/>
    </location>
</feature>
<feature type="chain" id="PRO_0000013514" description="Class I hydrophobin SC4">
    <location>
        <begin position="26"/>
        <end position="111"/>
    </location>
</feature>
<feature type="glycosylation site" description="N-linked (GlcNAc...) asparagine" evidence="2">
    <location>
        <position position="39"/>
    </location>
</feature>
<feature type="disulfide bond" evidence="1">
    <location>
        <begin position="30"/>
        <end position="37"/>
    </location>
</feature>
<feature type="disulfide bond" evidence="1">
    <location>
        <begin position="38"/>
        <end position="72"/>
    </location>
</feature>
<feature type="disulfide bond" evidence="1">
    <location>
        <begin position="86"/>
        <end position="92"/>
    </location>
</feature>
<feature type="disulfide bond" evidence="1">
    <location>
        <begin position="93"/>
        <end position="106"/>
    </location>
</feature>